<sequence>MSLLPPEQRQLLHRCILNYIRSQVPGDGAEGETGGQTEERHVMNSLAKWLRVDPDGLDGEKAADGSLLPRKWSSIVRLQRRIIELEKEIQELTDENENLRENGPSSPANGALKSWLPRERPSFSISAGASVTSVKLHPELPLVFIATDAGKLQCYDLMNYTMPVASVQAHMRGITAIDAYVGEDSQCLVATASKDLHCKVFRFVDSELQLIRTLSGHEHIVSHIKIWNNSTNTLVASCSRDLTCKVWDIANGWCLKSFQPHTEWVRCLDVMGDFVVTGSNDCTVRLSHWPTGRSLSFGTGHEFPVEKIRIIPLQPPESAEHSHRFNTHDEDYLPLGFSHVISTSRDGTLRIWQVPLPRFVAHRAPQPNPARPYFNLVATLKGHSSWVRDVRVRGKHAFSCSDDRSIKVWDLSTCEVVRSINNLHSGFINCIDIDCGGLNRQLLVSGGADGKLVILMK</sequence>
<dbReference type="EMBL" id="CU928168">
    <property type="protein sequence ID" value="CAR22803.1"/>
    <property type="molecule type" value="Genomic_DNA"/>
</dbReference>
<dbReference type="RefSeq" id="XP_002553241.1">
    <property type="nucleotide sequence ID" value="XM_002553195.1"/>
</dbReference>
<dbReference type="SMR" id="C5DF48"/>
<dbReference type="FunCoup" id="C5DF48">
    <property type="interactions" value="85"/>
</dbReference>
<dbReference type="STRING" id="559295.C5DF48"/>
<dbReference type="GeneID" id="8295481"/>
<dbReference type="KEGG" id="lth:KLTH0D12188g"/>
<dbReference type="eggNOG" id="KOG0295">
    <property type="taxonomic scope" value="Eukaryota"/>
</dbReference>
<dbReference type="HOGENOM" id="CLU_000288_57_15_1"/>
<dbReference type="InParanoid" id="C5DF48"/>
<dbReference type="OMA" id="RGTCLMT"/>
<dbReference type="OrthoDB" id="10264588at2759"/>
<dbReference type="Proteomes" id="UP000002036">
    <property type="component" value="Chromosome D"/>
</dbReference>
<dbReference type="GO" id="GO:0005737">
    <property type="term" value="C:cytoplasm"/>
    <property type="evidence" value="ECO:0007669"/>
    <property type="project" value="UniProtKB-UniRule"/>
</dbReference>
<dbReference type="GO" id="GO:0005874">
    <property type="term" value="C:microtubule"/>
    <property type="evidence" value="ECO:0007669"/>
    <property type="project" value="UniProtKB-KW"/>
</dbReference>
<dbReference type="GO" id="GO:0005875">
    <property type="term" value="C:microtubule associated complex"/>
    <property type="evidence" value="ECO:0007669"/>
    <property type="project" value="UniProtKB-UniRule"/>
</dbReference>
<dbReference type="GO" id="GO:0048188">
    <property type="term" value="C:Set1C/COMPASS complex"/>
    <property type="evidence" value="ECO:0007669"/>
    <property type="project" value="TreeGrafter"/>
</dbReference>
<dbReference type="GO" id="GO:0000922">
    <property type="term" value="C:spindle pole"/>
    <property type="evidence" value="ECO:0007669"/>
    <property type="project" value="UniProtKB-SubCell"/>
</dbReference>
<dbReference type="GO" id="GO:0070840">
    <property type="term" value="F:dynein complex binding"/>
    <property type="evidence" value="ECO:0007669"/>
    <property type="project" value="UniProtKB-UniRule"/>
</dbReference>
<dbReference type="GO" id="GO:0042393">
    <property type="term" value="F:histone binding"/>
    <property type="evidence" value="ECO:0007669"/>
    <property type="project" value="TreeGrafter"/>
</dbReference>
<dbReference type="GO" id="GO:0051301">
    <property type="term" value="P:cell division"/>
    <property type="evidence" value="ECO:0007669"/>
    <property type="project" value="UniProtKB-KW"/>
</dbReference>
<dbReference type="GO" id="GO:0000132">
    <property type="term" value="P:establishment of mitotic spindle orientation"/>
    <property type="evidence" value="ECO:0007669"/>
    <property type="project" value="UniProtKB-UniRule"/>
</dbReference>
<dbReference type="GO" id="GO:0051012">
    <property type="term" value="P:microtubule sliding"/>
    <property type="evidence" value="ECO:0007669"/>
    <property type="project" value="UniProtKB-UniRule"/>
</dbReference>
<dbReference type="CDD" id="cd00200">
    <property type="entry name" value="WD40"/>
    <property type="match status" value="1"/>
</dbReference>
<dbReference type="Gene3D" id="1.20.960.30">
    <property type="match status" value="1"/>
</dbReference>
<dbReference type="Gene3D" id="2.130.10.10">
    <property type="entry name" value="YVTN repeat-like/Quinoprotein amine dehydrogenase"/>
    <property type="match status" value="1"/>
</dbReference>
<dbReference type="HAMAP" id="MF_03141">
    <property type="entry name" value="lis1"/>
    <property type="match status" value="1"/>
</dbReference>
<dbReference type="InterPro" id="IPR017252">
    <property type="entry name" value="Dynein_regulator_LIS1"/>
</dbReference>
<dbReference type="InterPro" id="IPR020472">
    <property type="entry name" value="G-protein_beta_WD-40_rep"/>
</dbReference>
<dbReference type="InterPro" id="IPR037190">
    <property type="entry name" value="LIS1_N"/>
</dbReference>
<dbReference type="InterPro" id="IPR015943">
    <property type="entry name" value="WD40/YVTN_repeat-like_dom_sf"/>
</dbReference>
<dbReference type="InterPro" id="IPR019775">
    <property type="entry name" value="WD40_repeat_CS"/>
</dbReference>
<dbReference type="InterPro" id="IPR036322">
    <property type="entry name" value="WD40_repeat_dom_sf"/>
</dbReference>
<dbReference type="InterPro" id="IPR001680">
    <property type="entry name" value="WD40_rpt"/>
</dbReference>
<dbReference type="PANTHER" id="PTHR22847:SF637">
    <property type="entry name" value="WD REPEAT DOMAIN 5B"/>
    <property type="match status" value="1"/>
</dbReference>
<dbReference type="PANTHER" id="PTHR22847">
    <property type="entry name" value="WD40 REPEAT PROTEIN"/>
    <property type="match status" value="1"/>
</dbReference>
<dbReference type="Pfam" id="PF00400">
    <property type="entry name" value="WD40"/>
    <property type="match status" value="3"/>
</dbReference>
<dbReference type="PRINTS" id="PR00320">
    <property type="entry name" value="GPROTEINBRPT"/>
</dbReference>
<dbReference type="SMART" id="SM00320">
    <property type="entry name" value="WD40"/>
    <property type="match status" value="7"/>
</dbReference>
<dbReference type="SUPFAM" id="SSF109925">
    <property type="entry name" value="Lissencephaly-1 protein (Lis-1, PAF-AH alpha) N-terminal domain"/>
    <property type="match status" value="1"/>
</dbReference>
<dbReference type="SUPFAM" id="SSF50978">
    <property type="entry name" value="WD40 repeat-like"/>
    <property type="match status" value="1"/>
</dbReference>
<dbReference type="PROSITE" id="PS00678">
    <property type="entry name" value="WD_REPEATS_1"/>
    <property type="match status" value="2"/>
</dbReference>
<dbReference type="PROSITE" id="PS50082">
    <property type="entry name" value="WD_REPEATS_2"/>
    <property type="match status" value="2"/>
</dbReference>
<dbReference type="PROSITE" id="PS50294">
    <property type="entry name" value="WD_REPEATS_REGION"/>
    <property type="match status" value="1"/>
</dbReference>
<name>LIS1_LACTC</name>
<gene>
    <name evidence="1" type="primary">PAC1</name>
    <name evidence="1" type="synonym">LIS1</name>
    <name type="ordered locus">KLTH0D12188g</name>
</gene>
<keyword id="KW-0131">Cell cycle</keyword>
<keyword id="KW-0132">Cell division</keyword>
<keyword id="KW-0175">Coiled coil</keyword>
<keyword id="KW-0963">Cytoplasm</keyword>
<keyword id="KW-0206">Cytoskeleton</keyword>
<keyword id="KW-0493">Microtubule</keyword>
<keyword id="KW-0498">Mitosis</keyword>
<keyword id="KW-1185">Reference proteome</keyword>
<keyword id="KW-0677">Repeat</keyword>
<keyword id="KW-0813">Transport</keyword>
<keyword id="KW-0853">WD repeat</keyword>
<evidence type="ECO:0000255" key="1">
    <source>
        <dbReference type="HAMAP-Rule" id="MF_03141"/>
    </source>
</evidence>
<proteinExistence type="inferred from homology"/>
<protein>
    <recommendedName>
        <fullName evidence="1">Nuclear distribution protein PAC1</fullName>
    </recommendedName>
    <alternativeName>
        <fullName evidence="1">Lissencephaly-1 homolog</fullName>
        <shortName evidence="1">LIS-1</shortName>
    </alternativeName>
    <alternativeName>
        <fullName evidence="1">nudF homolog</fullName>
    </alternativeName>
</protein>
<organism>
    <name type="scientific">Lachancea thermotolerans (strain ATCC 56472 / CBS 6340 / NRRL Y-8284)</name>
    <name type="common">Yeast</name>
    <name type="synonym">Kluyveromyces thermotolerans</name>
    <dbReference type="NCBI Taxonomy" id="559295"/>
    <lineage>
        <taxon>Eukaryota</taxon>
        <taxon>Fungi</taxon>
        <taxon>Dikarya</taxon>
        <taxon>Ascomycota</taxon>
        <taxon>Saccharomycotina</taxon>
        <taxon>Saccharomycetes</taxon>
        <taxon>Saccharomycetales</taxon>
        <taxon>Saccharomycetaceae</taxon>
        <taxon>Lachancea</taxon>
    </lineage>
</organism>
<accession>C5DF48</accession>
<reference key="1">
    <citation type="journal article" date="2009" name="Genome Res.">
        <title>Comparative genomics of protoploid Saccharomycetaceae.</title>
        <authorList>
            <consortium name="The Genolevures Consortium"/>
            <person name="Souciet J.-L."/>
            <person name="Dujon B."/>
            <person name="Gaillardin C."/>
            <person name="Johnston M."/>
            <person name="Baret P.V."/>
            <person name="Cliften P."/>
            <person name="Sherman D.J."/>
            <person name="Weissenbach J."/>
            <person name="Westhof E."/>
            <person name="Wincker P."/>
            <person name="Jubin C."/>
            <person name="Poulain J."/>
            <person name="Barbe V."/>
            <person name="Segurens B."/>
            <person name="Artiguenave F."/>
            <person name="Anthouard V."/>
            <person name="Vacherie B."/>
            <person name="Val M.-E."/>
            <person name="Fulton R.S."/>
            <person name="Minx P."/>
            <person name="Wilson R."/>
            <person name="Durrens P."/>
            <person name="Jean G."/>
            <person name="Marck C."/>
            <person name="Martin T."/>
            <person name="Nikolski M."/>
            <person name="Rolland T."/>
            <person name="Seret M.-L."/>
            <person name="Casaregola S."/>
            <person name="Despons L."/>
            <person name="Fairhead C."/>
            <person name="Fischer G."/>
            <person name="Lafontaine I."/>
            <person name="Leh V."/>
            <person name="Lemaire M."/>
            <person name="de Montigny J."/>
            <person name="Neuveglise C."/>
            <person name="Thierry A."/>
            <person name="Blanc-Lenfle I."/>
            <person name="Bleykasten C."/>
            <person name="Diffels J."/>
            <person name="Fritsch E."/>
            <person name="Frangeul L."/>
            <person name="Goeffon A."/>
            <person name="Jauniaux N."/>
            <person name="Kachouri-Lafond R."/>
            <person name="Payen C."/>
            <person name="Potier S."/>
            <person name="Pribylova L."/>
            <person name="Ozanne C."/>
            <person name="Richard G.-F."/>
            <person name="Sacerdot C."/>
            <person name="Straub M.-L."/>
            <person name="Talla E."/>
        </authorList>
    </citation>
    <scope>NUCLEOTIDE SEQUENCE [LARGE SCALE GENOMIC DNA]</scope>
    <source>
        <strain>ATCC 56472 / CBS 6340 / NRRL Y-8284</strain>
    </source>
</reference>
<comment type="function">
    <text evidence="1">Positively regulates the activity of the minus-end directed microtubule motor protein dynein. Plays a central role in positioning the mitotic spindle at the bud neck during cell division. Targets cytoplasmic dynein to microtubule plus ends, thereby promoting dynein-mediated microtubule sliding along the bud cortex and consequently the movement of the mitotic spindle to the bud neck.</text>
</comment>
<comment type="subunit">
    <text evidence="1">Self-associates. Interacts with NDL1 and dynein.</text>
</comment>
<comment type="subcellular location">
    <subcellularLocation>
        <location evidence="1">Cytoplasm</location>
        <location evidence="1">Cytoskeleton</location>
    </subcellularLocation>
    <subcellularLocation>
        <location evidence="1">Cytoplasm</location>
        <location evidence="1">Cytoskeleton</location>
        <location evidence="1">Spindle pole</location>
    </subcellularLocation>
    <text evidence="1">Localizes to the plus ends of microtubules and the mitotic spindle poles.</text>
</comment>
<comment type="similarity">
    <text evidence="1">Belongs to the WD repeat LIS1/nudF family.</text>
</comment>
<feature type="chain" id="PRO_0000405081" description="Nuclear distribution protein PAC1">
    <location>
        <begin position="1"/>
        <end position="457"/>
    </location>
</feature>
<feature type="repeat" description="WD 1">
    <location>
        <begin position="126"/>
        <end position="165"/>
    </location>
</feature>
<feature type="repeat" description="WD 2">
    <location>
        <begin position="169"/>
        <end position="211"/>
    </location>
</feature>
<feature type="repeat" description="WD 3">
    <location>
        <begin position="216"/>
        <end position="257"/>
    </location>
</feature>
<feature type="repeat" description="WD 4">
    <location>
        <begin position="260"/>
        <end position="299"/>
    </location>
</feature>
<feature type="repeat" description="WD 5">
    <location>
        <begin position="322"/>
        <end position="362"/>
    </location>
</feature>
<feature type="repeat" description="WD 6">
    <location>
        <begin position="382"/>
        <end position="419"/>
    </location>
</feature>
<feature type="repeat" description="WD 7">
    <location>
        <begin position="423"/>
        <end position="457"/>
    </location>
</feature>
<feature type="coiled-coil region" evidence="1">
    <location>
        <begin position="73"/>
        <end position="106"/>
    </location>
</feature>